<accession>Q8FWP6</accession>
<accession>G0KCD8</accession>
<comment type="function">
    <text evidence="2">Component of an amino-acid transport system.</text>
</comment>
<comment type="similarity">
    <text evidence="2">Belongs to the leucine-binding protein family.</text>
</comment>
<comment type="sequence caution" evidence="2">
    <conflict type="erroneous initiation">
        <sequence resource="EMBL-CDS" id="AAN33597"/>
    </conflict>
</comment>
<comment type="sequence caution" evidence="2">
    <conflict type="erroneous initiation">
        <sequence resource="EMBL-CDS" id="AEM19876"/>
    </conflict>
    <text>Truncated N-terminus.</text>
</comment>
<gene>
    <name type="ordered locus">BRA0400</name>
    <name type="ordered locus">BS1330_II0397</name>
</gene>
<evidence type="ECO:0000255" key="1"/>
<evidence type="ECO:0000305" key="2"/>
<proteinExistence type="inferred from homology"/>
<keyword id="KW-0029">Amino-acid transport</keyword>
<keyword id="KW-0732">Signal</keyword>
<keyword id="KW-0813">Transport</keyword>
<reference key="1">
    <citation type="journal article" date="2002" name="Proc. Natl. Acad. Sci. U.S.A.">
        <title>The Brucella suis genome reveals fundamental similarities between animal and plant pathogens and symbionts.</title>
        <authorList>
            <person name="Paulsen I.T."/>
            <person name="Seshadri R."/>
            <person name="Nelson K.E."/>
            <person name="Eisen J.A."/>
            <person name="Heidelberg J.F."/>
            <person name="Read T.D."/>
            <person name="Dodson R.J."/>
            <person name="Umayam L.A."/>
            <person name="Brinkac L.M."/>
            <person name="Beanan M.J."/>
            <person name="Daugherty S.C."/>
            <person name="DeBoy R.T."/>
            <person name="Durkin A.S."/>
            <person name="Kolonay J.F."/>
            <person name="Madupu R."/>
            <person name="Nelson W.C."/>
            <person name="Ayodeji B."/>
            <person name="Kraul M."/>
            <person name="Shetty J."/>
            <person name="Malek J.A."/>
            <person name="Van Aken S.E."/>
            <person name="Riedmuller S."/>
            <person name="Tettelin H."/>
            <person name="Gill S.R."/>
            <person name="White O."/>
            <person name="Salzberg S.L."/>
            <person name="Hoover D.L."/>
            <person name="Lindler L.E."/>
            <person name="Halling S.M."/>
            <person name="Boyle S.M."/>
            <person name="Fraser C.M."/>
        </authorList>
    </citation>
    <scope>NUCLEOTIDE SEQUENCE [LARGE SCALE GENOMIC DNA]</scope>
    <source>
        <strain>1330</strain>
    </source>
</reference>
<reference key="2">
    <citation type="journal article" date="2011" name="J. Bacteriol.">
        <title>Revised genome sequence of Brucella suis 1330.</title>
        <authorList>
            <person name="Tae H."/>
            <person name="Shallom S."/>
            <person name="Settlage R."/>
            <person name="Preston D."/>
            <person name="Adams L.G."/>
            <person name="Garner H.R."/>
        </authorList>
    </citation>
    <scope>NUCLEOTIDE SEQUENCE [LARGE SCALE GENOMIC DNA]</scope>
    <source>
        <strain>1330</strain>
    </source>
</reference>
<feature type="signal peptide" evidence="1">
    <location>
        <begin position="1"/>
        <end position="22"/>
    </location>
</feature>
<feature type="chain" id="PRO_0000285744" description="Leu/Ile/Val-binding protein homolog 7">
    <location>
        <begin position="23"/>
        <end position="399"/>
    </location>
</feature>
<sequence length="399" mass="42374">MEKHLIALSVAALLAGAAPASADIKMGSLYPFSGPLALLGDESARGLEIAVEEINAKGGVQGEKIVLVRGDAVDNNQAIGEARRLISVENVAGIFGTFSSGRAVAASQVSELAGVPYFELGAVADEITDRGLENVYRANPYARDFAQMIVEMLQKKIAPKLGKDSKDLKIAVIYEDSSYGTSVAKHEETFLKEAGLNMVLSQSYPGNTVDMSSLVLDLKSAGADVVLQTSYQSDSVLFLQQANEGGYKPSAIVGAGGGYSLQPTADAVGHDVIEAAYDVDFTQFAVNTSFTPGLEEFVEAYKKKYGETPRSGHSLTNYVGAKVILEALNKVKGFDAAAVKQALSAVDIEAGKTAMGYGFKFDQNNQNERASMMGMQWQDGKLVTVYPDAAAISEIRLPQ</sequence>
<organism>
    <name type="scientific">Brucella suis biovar 1 (strain 1330)</name>
    <dbReference type="NCBI Taxonomy" id="204722"/>
    <lineage>
        <taxon>Bacteria</taxon>
        <taxon>Pseudomonadati</taxon>
        <taxon>Pseudomonadota</taxon>
        <taxon>Alphaproteobacteria</taxon>
        <taxon>Hyphomicrobiales</taxon>
        <taxon>Brucellaceae</taxon>
        <taxon>Brucella/Ochrobactrum group</taxon>
        <taxon>Brucella</taxon>
    </lineage>
</organism>
<name>LIVB7_BRUSU</name>
<dbReference type="EMBL" id="AE014292">
    <property type="protein sequence ID" value="AAN33597.1"/>
    <property type="status" value="ALT_INIT"/>
    <property type="molecule type" value="Genomic_DNA"/>
</dbReference>
<dbReference type="EMBL" id="CP002998">
    <property type="protein sequence ID" value="AEM19876.1"/>
    <property type="status" value="ALT_INIT"/>
    <property type="molecule type" value="Genomic_DNA"/>
</dbReference>
<dbReference type="RefSeq" id="WP_004687393.1">
    <property type="nucleotide sequence ID" value="NZ_KN046805.1"/>
</dbReference>
<dbReference type="SMR" id="Q8FWP6"/>
<dbReference type="KEGG" id="bms:BRA0400"/>
<dbReference type="KEGG" id="bsi:BS1330_II0397"/>
<dbReference type="PATRIC" id="fig|204722.21.peg.96"/>
<dbReference type="HOGENOM" id="CLU_027128_4_0_5"/>
<dbReference type="PhylomeDB" id="Q8FWP6"/>
<dbReference type="Proteomes" id="UP000007104">
    <property type="component" value="Chromosome II"/>
</dbReference>
<dbReference type="GO" id="GO:0006865">
    <property type="term" value="P:amino acid transport"/>
    <property type="evidence" value="ECO:0007669"/>
    <property type="project" value="UniProtKB-KW"/>
</dbReference>
<dbReference type="CDD" id="cd06340">
    <property type="entry name" value="PBP1_ABC_ligand_binding-like"/>
    <property type="match status" value="1"/>
</dbReference>
<dbReference type="Gene3D" id="3.40.50.2300">
    <property type="match status" value="2"/>
</dbReference>
<dbReference type="InterPro" id="IPR051010">
    <property type="entry name" value="BCAA_transport"/>
</dbReference>
<dbReference type="InterPro" id="IPR028081">
    <property type="entry name" value="Leu-bd"/>
</dbReference>
<dbReference type="InterPro" id="IPR000709">
    <property type="entry name" value="Leu_Ile_Val-bd"/>
</dbReference>
<dbReference type="InterPro" id="IPR028082">
    <property type="entry name" value="Peripla_BP_I"/>
</dbReference>
<dbReference type="PANTHER" id="PTHR30483:SF37">
    <property type="entry name" value="ABC TRANSPORTER SUBSTRATE-BINDING PROTEIN"/>
    <property type="match status" value="1"/>
</dbReference>
<dbReference type="PANTHER" id="PTHR30483">
    <property type="entry name" value="LEUCINE-SPECIFIC-BINDING PROTEIN"/>
    <property type="match status" value="1"/>
</dbReference>
<dbReference type="Pfam" id="PF13458">
    <property type="entry name" value="Peripla_BP_6"/>
    <property type="match status" value="1"/>
</dbReference>
<dbReference type="PRINTS" id="PR00337">
    <property type="entry name" value="LEUILEVALBP"/>
</dbReference>
<dbReference type="SUPFAM" id="SSF53822">
    <property type="entry name" value="Periplasmic binding protein-like I"/>
    <property type="match status" value="1"/>
</dbReference>
<protein>
    <recommendedName>
        <fullName>Leu/Ile/Val-binding protein homolog 7</fullName>
    </recommendedName>
</protein>